<evidence type="ECO:0000250" key="1">
    <source>
        <dbReference type="UniProtKB" id="Q9Y5V0"/>
    </source>
</evidence>
<evidence type="ECO:0000256" key="2">
    <source>
        <dbReference type="SAM" id="MobiDB-lite"/>
    </source>
</evidence>
<evidence type="ECO:0000269" key="3">
    <source>
    </source>
</evidence>
<evidence type="ECO:0000305" key="4"/>
<evidence type="ECO:0000312" key="5">
    <source>
        <dbReference type="MGI" id="MGI:1915286"/>
    </source>
</evidence>
<feature type="chain" id="PRO_0000047704" description="Zinc finger protein 706">
    <location>
        <begin position="1"/>
        <end position="76"/>
    </location>
</feature>
<feature type="zinc finger region" description="C2H2-type">
    <location>
        <begin position="39"/>
        <end position="62"/>
    </location>
</feature>
<feature type="region of interest" description="Disordered" evidence="2">
    <location>
        <begin position="1"/>
        <end position="32"/>
    </location>
</feature>
<feature type="region of interest" description="Disordered" evidence="2">
    <location>
        <begin position="53"/>
        <end position="76"/>
    </location>
</feature>
<feature type="compositionally biased region" description="Low complexity" evidence="2">
    <location>
        <begin position="1"/>
        <end position="13"/>
    </location>
</feature>
<feature type="compositionally biased region" description="Basic residues" evidence="2">
    <location>
        <begin position="14"/>
        <end position="25"/>
    </location>
</feature>
<feature type="compositionally biased region" description="Basic and acidic residues" evidence="2">
    <location>
        <begin position="53"/>
        <end position="62"/>
    </location>
</feature>
<feature type="mutagenesis site" description="Unable to restore differentiation of embryonic stem cells (ESCs)." evidence="3">
    <original>CTVC</original>
    <variation>ATVA</variation>
    <location>
        <begin position="41"/>
        <end position="44"/>
    </location>
</feature>
<accession>Q9D115</accession>
<name>ZN706_MOUSE</name>
<reference key="1">
    <citation type="journal article" date="2005" name="Science">
        <title>The transcriptional landscape of the mammalian genome.</title>
        <authorList>
            <person name="Carninci P."/>
            <person name="Kasukawa T."/>
            <person name="Katayama S."/>
            <person name="Gough J."/>
            <person name="Frith M.C."/>
            <person name="Maeda N."/>
            <person name="Oyama R."/>
            <person name="Ravasi T."/>
            <person name="Lenhard B."/>
            <person name="Wells C."/>
            <person name="Kodzius R."/>
            <person name="Shimokawa K."/>
            <person name="Bajic V.B."/>
            <person name="Brenner S.E."/>
            <person name="Batalov S."/>
            <person name="Forrest A.R."/>
            <person name="Zavolan M."/>
            <person name="Davis M.J."/>
            <person name="Wilming L.G."/>
            <person name="Aidinis V."/>
            <person name="Allen J.E."/>
            <person name="Ambesi-Impiombato A."/>
            <person name="Apweiler R."/>
            <person name="Aturaliya R.N."/>
            <person name="Bailey T.L."/>
            <person name="Bansal M."/>
            <person name="Baxter L."/>
            <person name="Beisel K.W."/>
            <person name="Bersano T."/>
            <person name="Bono H."/>
            <person name="Chalk A.M."/>
            <person name="Chiu K.P."/>
            <person name="Choudhary V."/>
            <person name="Christoffels A."/>
            <person name="Clutterbuck D.R."/>
            <person name="Crowe M.L."/>
            <person name="Dalla E."/>
            <person name="Dalrymple B.P."/>
            <person name="de Bono B."/>
            <person name="Della Gatta G."/>
            <person name="di Bernardo D."/>
            <person name="Down T."/>
            <person name="Engstrom P."/>
            <person name="Fagiolini M."/>
            <person name="Faulkner G."/>
            <person name="Fletcher C.F."/>
            <person name="Fukushima T."/>
            <person name="Furuno M."/>
            <person name="Futaki S."/>
            <person name="Gariboldi M."/>
            <person name="Georgii-Hemming P."/>
            <person name="Gingeras T.R."/>
            <person name="Gojobori T."/>
            <person name="Green R.E."/>
            <person name="Gustincich S."/>
            <person name="Harbers M."/>
            <person name="Hayashi Y."/>
            <person name="Hensch T.K."/>
            <person name="Hirokawa N."/>
            <person name="Hill D."/>
            <person name="Huminiecki L."/>
            <person name="Iacono M."/>
            <person name="Ikeo K."/>
            <person name="Iwama A."/>
            <person name="Ishikawa T."/>
            <person name="Jakt M."/>
            <person name="Kanapin A."/>
            <person name="Katoh M."/>
            <person name="Kawasawa Y."/>
            <person name="Kelso J."/>
            <person name="Kitamura H."/>
            <person name="Kitano H."/>
            <person name="Kollias G."/>
            <person name="Krishnan S.P."/>
            <person name="Kruger A."/>
            <person name="Kummerfeld S.K."/>
            <person name="Kurochkin I.V."/>
            <person name="Lareau L.F."/>
            <person name="Lazarevic D."/>
            <person name="Lipovich L."/>
            <person name="Liu J."/>
            <person name="Liuni S."/>
            <person name="McWilliam S."/>
            <person name="Madan Babu M."/>
            <person name="Madera M."/>
            <person name="Marchionni L."/>
            <person name="Matsuda H."/>
            <person name="Matsuzawa S."/>
            <person name="Miki H."/>
            <person name="Mignone F."/>
            <person name="Miyake S."/>
            <person name="Morris K."/>
            <person name="Mottagui-Tabar S."/>
            <person name="Mulder N."/>
            <person name="Nakano N."/>
            <person name="Nakauchi H."/>
            <person name="Ng P."/>
            <person name="Nilsson R."/>
            <person name="Nishiguchi S."/>
            <person name="Nishikawa S."/>
            <person name="Nori F."/>
            <person name="Ohara O."/>
            <person name="Okazaki Y."/>
            <person name="Orlando V."/>
            <person name="Pang K.C."/>
            <person name="Pavan W.J."/>
            <person name="Pavesi G."/>
            <person name="Pesole G."/>
            <person name="Petrovsky N."/>
            <person name="Piazza S."/>
            <person name="Reed J."/>
            <person name="Reid J.F."/>
            <person name="Ring B.Z."/>
            <person name="Ringwald M."/>
            <person name="Rost B."/>
            <person name="Ruan Y."/>
            <person name="Salzberg S.L."/>
            <person name="Sandelin A."/>
            <person name="Schneider C."/>
            <person name="Schoenbach C."/>
            <person name="Sekiguchi K."/>
            <person name="Semple C.A."/>
            <person name="Seno S."/>
            <person name="Sessa L."/>
            <person name="Sheng Y."/>
            <person name="Shibata Y."/>
            <person name="Shimada H."/>
            <person name="Shimada K."/>
            <person name="Silva D."/>
            <person name="Sinclair B."/>
            <person name="Sperling S."/>
            <person name="Stupka E."/>
            <person name="Sugiura K."/>
            <person name="Sultana R."/>
            <person name="Takenaka Y."/>
            <person name="Taki K."/>
            <person name="Tammoja K."/>
            <person name="Tan S.L."/>
            <person name="Tang S."/>
            <person name="Taylor M.S."/>
            <person name="Tegner J."/>
            <person name="Teichmann S.A."/>
            <person name="Ueda H.R."/>
            <person name="van Nimwegen E."/>
            <person name="Verardo R."/>
            <person name="Wei C.L."/>
            <person name="Yagi K."/>
            <person name="Yamanishi H."/>
            <person name="Zabarovsky E."/>
            <person name="Zhu S."/>
            <person name="Zimmer A."/>
            <person name="Hide W."/>
            <person name="Bult C."/>
            <person name="Grimmond S.M."/>
            <person name="Teasdale R.D."/>
            <person name="Liu E.T."/>
            <person name="Brusic V."/>
            <person name="Quackenbush J."/>
            <person name="Wahlestedt C."/>
            <person name="Mattick J.S."/>
            <person name="Hume D.A."/>
            <person name="Kai C."/>
            <person name="Sasaki D."/>
            <person name="Tomaru Y."/>
            <person name="Fukuda S."/>
            <person name="Kanamori-Katayama M."/>
            <person name="Suzuki M."/>
            <person name="Aoki J."/>
            <person name="Arakawa T."/>
            <person name="Iida J."/>
            <person name="Imamura K."/>
            <person name="Itoh M."/>
            <person name="Kato T."/>
            <person name="Kawaji H."/>
            <person name="Kawagashira N."/>
            <person name="Kawashima T."/>
            <person name="Kojima M."/>
            <person name="Kondo S."/>
            <person name="Konno H."/>
            <person name="Nakano K."/>
            <person name="Ninomiya N."/>
            <person name="Nishio T."/>
            <person name="Okada M."/>
            <person name="Plessy C."/>
            <person name="Shibata K."/>
            <person name="Shiraki T."/>
            <person name="Suzuki S."/>
            <person name="Tagami M."/>
            <person name="Waki K."/>
            <person name="Watahiki A."/>
            <person name="Okamura-Oho Y."/>
            <person name="Suzuki H."/>
            <person name="Kawai J."/>
            <person name="Hayashizaki Y."/>
        </authorList>
    </citation>
    <scope>NUCLEOTIDE SEQUENCE [LARGE SCALE MRNA]</scope>
    <source>
        <strain>BALB/cJ</strain>
        <strain>C57BL/6J</strain>
        <strain>DBA/2J</strain>
        <tissue>Cerebellum</tissue>
        <tissue>Head</tissue>
        <tissue>Olfactory bulb</tissue>
    </source>
</reference>
<reference key="2">
    <citation type="journal article" date="2004" name="Genome Res.">
        <title>The status, quality, and expansion of the NIH full-length cDNA project: the Mammalian Gene Collection (MGC).</title>
        <authorList>
            <consortium name="The MGC Project Team"/>
        </authorList>
    </citation>
    <scope>NUCLEOTIDE SEQUENCE [LARGE SCALE MRNA]</scope>
    <source>
        <strain>C57BL/6J</strain>
        <strain>FVB/N</strain>
        <tissue>Brain</tissue>
        <tissue>Kidney</tissue>
        <tissue>Mammary tumor</tissue>
    </source>
</reference>
<reference key="3">
    <citation type="journal article" date="2010" name="Cell">
        <title>A tissue-specific atlas of mouse protein phosphorylation and expression.</title>
        <authorList>
            <person name="Huttlin E.L."/>
            <person name="Jedrychowski M.P."/>
            <person name="Elias J.E."/>
            <person name="Goswami T."/>
            <person name="Rad R."/>
            <person name="Beausoleil S.A."/>
            <person name="Villen J."/>
            <person name="Haas W."/>
            <person name="Sowa M.E."/>
            <person name="Gygi S.P."/>
        </authorList>
    </citation>
    <scope>IDENTIFICATION BY MASS SPECTROMETRY [LARGE SCALE ANALYSIS]</scope>
    <source>
        <tissue>Testis</tissue>
    </source>
</reference>
<reference key="4">
    <citation type="journal article" date="2014" name="Cell Stem Cell">
        <title>Genetic exploration of the exit from self-renewal using haploid embryonic stem cells.</title>
        <authorList>
            <person name="Leeb M."/>
            <person name="Dietmann S."/>
            <person name="Paramor M."/>
            <person name="Niwa H."/>
            <person name="Smith A."/>
        </authorList>
    </citation>
    <scope>FUNCTION</scope>
    <scope>SUBCELLULAR LOCATION</scope>
    <scope>DEVELOPMENTAL STAGE</scope>
    <scope>MUTAGENESIS OF 41-CYS--CYS-44</scope>
</reference>
<gene>
    <name evidence="1" type="primary">Znf706</name>
    <name evidence="5" type="synonym">Zfp706</name>
</gene>
<proteinExistence type="evidence at protein level"/>
<keyword id="KW-0963">Cytoplasm</keyword>
<keyword id="KW-0479">Metal-binding</keyword>
<keyword id="KW-0539">Nucleus</keyword>
<keyword id="KW-1185">Reference proteome</keyword>
<keyword id="KW-0678">Repressor</keyword>
<keyword id="KW-0810">Translation regulation</keyword>
<keyword id="KW-0862">Zinc</keyword>
<keyword id="KW-0863">Zinc-finger</keyword>
<protein>
    <recommendedName>
        <fullName evidence="4">Zinc finger protein 706</fullName>
    </recommendedName>
</protein>
<dbReference type="EMBL" id="AK004076">
    <property type="protein sequence ID" value="BAB23156.1"/>
    <property type="molecule type" value="mRNA"/>
</dbReference>
<dbReference type="EMBL" id="AK032231">
    <property type="protein sequence ID" value="BAC27773.1"/>
    <property type="molecule type" value="mRNA"/>
</dbReference>
<dbReference type="EMBL" id="AK082392">
    <property type="protein sequence ID" value="BAC38485.1"/>
    <property type="molecule type" value="mRNA"/>
</dbReference>
<dbReference type="EMBL" id="AK132053">
    <property type="protein sequence ID" value="BAE20963.1"/>
    <property type="molecule type" value="mRNA"/>
</dbReference>
<dbReference type="EMBL" id="AK145319">
    <property type="protein sequence ID" value="BAE26365.1"/>
    <property type="molecule type" value="mRNA"/>
</dbReference>
<dbReference type="EMBL" id="AK166530">
    <property type="protein sequence ID" value="BAE38834.1"/>
    <property type="molecule type" value="mRNA"/>
</dbReference>
<dbReference type="EMBL" id="AK167791">
    <property type="protein sequence ID" value="BAE39821.1"/>
    <property type="molecule type" value="mRNA"/>
</dbReference>
<dbReference type="EMBL" id="AK167897">
    <property type="protein sequence ID" value="BAE39908.1"/>
    <property type="molecule type" value="mRNA"/>
</dbReference>
<dbReference type="EMBL" id="AK168303">
    <property type="protein sequence ID" value="BAE40244.1"/>
    <property type="molecule type" value="mRNA"/>
</dbReference>
<dbReference type="EMBL" id="AK168958">
    <property type="protein sequence ID" value="BAE40764.1"/>
    <property type="molecule type" value="mRNA"/>
</dbReference>
<dbReference type="EMBL" id="BC037600">
    <property type="protein sequence ID" value="AAH37600.1"/>
    <property type="molecule type" value="mRNA"/>
</dbReference>
<dbReference type="EMBL" id="BC042704">
    <property type="protein sequence ID" value="AAH42704.1"/>
    <property type="molecule type" value="mRNA"/>
</dbReference>
<dbReference type="EMBL" id="BC052459">
    <property type="protein sequence ID" value="AAH52459.1"/>
    <property type="molecule type" value="mRNA"/>
</dbReference>
<dbReference type="EMBL" id="BC085477">
    <property type="protein sequence ID" value="AAH85477.1"/>
    <property type="molecule type" value="mRNA"/>
</dbReference>
<dbReference type="CCDS" id="CCDS37063.1"/>
<dbReference type="RefSeq" id="NP_080797.1">
    <property type="nucleotide sequence ID" value="NM_026521.4"/>
</dbReference>
<dbReference type="BioGRID" id="212616">
    <property type="interactions" value="1"/>
</dbReference>
<dbReference type="FunCoup" id="Q9D115">
    <property type="interactions" value="3827"/>
</dbReference>
<dbReference type="IntAct" id="Q9D115">
    <property type="interactions" value="2"/>
</dbReference>
<dbReference type="MINT" id="Q9D115"/>
<dbReference type="STRING" id="10090.ENSMUSP00000077996"/>
<dbReference type="iPTMnet" id="Q9D115"/>
<dbReference type="PhosphoSitePlus" id="Q9D115"/>
<dbReference type="PaxDb" id="10090-ENSMUSP00000077996"/>
<dbReference type="ProteomicsDB" id="302141"/>
<dbReference type="Pumba" id="Q9D115"/>
<dbReference type="Antibodypedia" id="26241">
    <property type="antibodies" value="35 antibodies from 12 providers"/>
</dbReference>
<dbReference type="DNASU" id="68036"/>
<dbReference type="Ensembl" id="ENSMUST00000078976.9">
    <property type="protein sequence ID" value="ENSMUSP00000077996.8"/>
    <property type="gene ID" value="ENSMUSG00000062397.9"/>
</dbReference>
<dbReference type="Ensembl" id="ENSMUST00000226453.2">
    <property type="protein sequence ID" value="ENSMUSP00000154190.2"/>
    <property type="gene ID" value="ENSMUSG00000062397.9"/>
</dbReference>
<dbReference type="Ensembl" id="ENSMUST00000226671.2">
    <property type="protein sequence ID" value="ENSMUSP00000154192.2"/>
    <property type="gene ID" value="ENSMUSG00000062397.9"/>
</dbReference>
<dbReference type="Ensembl" id="ENSMUST00000228275.2">
    <property type="protein sequence ID" value="ENSMUSP00000154243.2"/>
    <property type="gene ID" value="ENSMUSG00000062397.9"/>
</dbReference>
<dbReference type="GeneID" id="68036"/>
<dbReference type="KEGG" id="mmu:68036"/>
<dbReference type="UCSC" id="uc007vnb.1">
    <property type="organism name" value="mouse"/>
</dbReference>
<dbReference type="AGR" id="MGI:1915286"/>
<dbReference type="CTD" id="68036"/>
<dbReference type="MGI" id="MGI:1915286">
    <property type="gene designation" value="Zfp706"/>
</dbReference>
<dbReference type="VEuPathDB" id="HostDB:ENSMUSG00000062397"/>
<dbReference type="eggNOG" id="KOG4118">
    <property type="taxonomic scope" value="Eukaryota"/>
</dbReference>
<dbReference type="GeneTree" id="ENSGT00390000003465"/>
<dbReference type="HOGENOM" id="CLU_176397_0_0_1"/>
<dbReference type="InParanoid" id="Q9D115"/>
<dbReference type="OMA" id="CDQKGAA"/>
<dbReference type="OrthoDB" id="73348at2759"/>
<dbReference type="PhylomeDB" id="Q9D115"/>
<dbReference type="TreeFam" id="TF315171"/>
<dbReference type="Reactome" id="R-MMU-212436">
    <property type="pathway name" value="Generic Transcription Pathway"/>
</dbReference>
<dbReference type="BioGRID-ORCS" id="68036">
    <property type="hits" value="7 hits in 75 CRISPR screens"/>
</dbReference>
<dbReference type="ChiTaRS" id="Zfp706">
    <property type="organism name" value="mouse"/>
</dbReference>
<dbReference type="PRO" id="PR:Q9D115"/>
<dbReference type="Proteomes" id="UP000000589">
    <property type="component" value="Chromosome 15"/>
</dbReference>
<dbReference type="RNAct" id="Q9D115">
    <property type="molecule type" value="protein"/>
</dbReference>
<dbReference type="Bgee" id="ENSMUSG00000062397">
    <property type="expression patterns" value="Expressed in vestibular membrane of cochlear duct and 267 other cell types or tissues"/>
</dbReference>
<dbReference type="ExpressionAtlas" id="Q9D115">
    <property type="expression patterns" value="baseline and differential"/>
</dbReference>
<dbReference type="GO" id="GO:0005737">
    <property type="term" value="C:cytoplasm"/>
    <property type="evidence" value="ECO:0000314"/>
    <property type="project" value="UniProtKB"/>
</dbReference>
<dbReference type="GO" id="GO:0005634">
    <property type="term" value="C:nucleus"/>
    <property type="evidence" value="ECO:0000314"/>
    <property type="project" value="UniProtKB"/>
</dbReference>
<dbReference type="GO" id="GO:0008270">
    <property type="term" value="F:zinc ion binding"/>
    <property type="evidence" value="ECO:0007669"/>
    <property type="project" value="UniProtKB-KW"/>
</dbReference>
<dbReference type="GO" id="GO:0045892">
    <property type="term" value="P:negative regulation of DNA-templated transcription"/>
    <property type="evidence" value="ECO:0000315"/>
    <property type="project" value="UniProtKB"/>
</dbReference>
<dbReference type="GO" id="GO:1902455">
    <property type="term" value="P:negative regulation of stem cell population maintenance"/>
    <property type="evidence" value="ECO:0000315"/>
    <property type="project" value="UniProtKB"/>
</dbReference>
<dbReference type="GO" id="GO:0006417">
    <property type="term" value="P:regulation of translation"/>
    <property type="evidence" value="ECO:0007669"/>
    <property type="project" value="UniProtKB-KW"/>
</dbReference>
<dbReference type="FunFam" id="4.10.1050.10:FF:000001">
    <property type="entry name" value="Zinc finger protein 706"/>
    <property type="match status" value="1"/>
</dbReference>
<dbReference type="Gene3D" id="4.10.1050.10">
    <property type="entry name" value="At2g23090-like"/>
    <property type="match status" value="1"/>
</dbReference>
<dbReference type="InterPro" id="IPR045230">
    <property type="entry name" value="MBS1/2-like"/>
</dbReference>
<dbReference type="InterPro" id="IPR007513">
    <property type="entry name" value="SERF-like_N"/>
</dbReference>
<dbReference type="InterPro" id="IPR026939">
    <property type="entry name" value="ZNF706/At2g23090_sf"/>
</dbReference>
<dbReference type="InterPro" id="IPR013087">
    <property type="entry name" value="Znf_C2H2_type"/>
</dbReference>
<dbReference type="PANTHER" id="PTHR21213">
    <property type="entry name" value="GEO09665P1-RELATED"/>
    <property type="match status" value="1"/>
</dbReference>
<dbReference type="PANTHER" id="PTHR21213:SF0">
    <property type="entry name" value="ZINC FINGER PROTEIN 706"/>
    <property type="match status" value="1"/>
</dbReference>
<dbReference type="Pfam" id="PF04419">
    <property type="entry name" value="SERF-like_N"/>
    <property type="match status" value="1"/>
</dbReference>
<dbReference type="Pfam" id="PF12874">
    <property type="entry name" value="zf-met"/>
    <property type="match status" value="1"/>
</dbReference>
<dbReference type="SUPFAM" id="SSF118359">
    <property type="entry name" value="Expressed protein At2g23090/F21P24.15"/>
    <property type="match status" value="1"/>
</dbReference>
<dbReference type="PROSITE" id="PS00028">
    <property type="entry name" value="ZINC_FINGER_C2H2_1"/>
    <property type="match status" value="1"/>
</dbReference>
<comment type="function">
    <text evidence="3">Transcription repressor involved in the exit of embryonic stem cells (ESCs) from self-renewal. Acts by repressing expression of KLF4.</text>
</comment>
<comment type="subcellular location">
    <subcellularLocation>
        <location evidence="3">Cytoplasm</location>
    </subcellularLocation>
    <subcellularLocation>
        <location evidence="3">Nucleus</location>
    </subcellularLocation>
</comment>
<comment type="developmental stage">
    <text evidence="3">Present in self-renewing embryonic stem cells (ESCs). Does not increase significantly at the onset of differentiation.</text>
</comment>
<organism>
    <name type="scientific">Mus musculus</name>
    <name type="common">Mouse</name>
    <dbReference type="NCBI Taxonomy" id="10090"/>
    <lineage>
        <taxon>Eukaryota</taxon>
        <taxon>Metazoa</taxon>
        <taxon>Chordata</taxon>
        <taxon>Craniata</taxon>
        <taxon>Vertebrata</taxon>
        <taxon>Euteleostomi</taxon>
        <taxon>Mammalia</taxon>
        <taxon>Eutheria</taxon>
        <taxon>Euarchontoglires</taxon>
        <taxon>Glires</taxon>
        <taxon>Rodentia</taxon>
        <taxon>Myomorpha</taxon>
        <taxon>Muroidea</taxon>
        <taxon>Muridae</taxon>
        <taxon>Murinae</taxon>
        <taxon>Mus</taxon>
        <taxon>Mus</taxon>
    </lineage>
</organism>
<sequence length="76" mass="8498">MARGQQKIQSQQKNAKKQAGQKKKQGHDQKAAAKAALIYTCTVCRTQMPDPKTFKQHFESKHPKTPLPPELADVQA</sequence>